<organism>
    <name type="scientific">Oceanobacillus iheyensis (strain DSM 14371 / CIP 107618 / JCM 11309 / KCTC 3954 / HTE831)</name>
    <dbReference type="NCBI Taxonomy" id="221109"/>
    <lineage>
        <taxon>Bacteria</taxon>
        <taxon>Bacillati</taxon>
        <taxon>Bacillota</taxon>
        <taxon>Bacilli</taxon>
        <taxon>Bacillales</taxon>
        <taxon>Bacillaceae</taxon>
        <taxon>Oceanobacillus</taxon>
    </lineage>
</organism>
<reference key="1">
    <citation type="journal article" date="2002" name="Nucleic Acids Res.">
        <title>Genome sequence of Oceanobacillus iheyensis isolated from the Iheya Ridge and its unexpected adaptive capabilities to extreme environments.</title>
        <authorList>
            <person name="Takami H."/>
            <person name="Takaki Y."/>
            <person name="Uchiyama I."/>
        </authorList>
    </citation>
    <scope>NUCLEOTIDE SEQUENCE [LARGE SCALE GENOMIC DNA]</scope>
    <source>
        <strain>DSM 14371 / CIP 107618 / JCM 11309 / KCTC 3954 / HTE831</strain>
    </source>
</reference>
<feature type="chain" id="PRO_0000115114" description="DNA mismatch repair protein MutS">
    <location>
        <begin position="1"/>
        <end position="867"/>
    </location>
</feature>
<feature type="binding site" evidence="1">
    <location>
        <begin position="606"/>
        <end position="613"/>
    </location>
    <ligand>
        <name>ATP</name>
        <dbReference type="ChEBI" id="CHEBI:30616"/>
    </ligand>
</feature>
<evidence type="ECO:0000255" key="1">
    <source>
        <dbReference type="HAMAP-Rule" id="MF_00096"/>
    </source>
</evidence>
<protein>
    <recommendedName>
        <fullName evidence="1">DNA mismatch repair protein MutS</fullName>
    </recommendedName>
</protein>
<dbReference type="EMBL" id="BA000028">
    <property type="protein sequence ID" value="BAC13587.1"/>
    <property type="molecule type" value="Genomic_DNA"/>
</dbReference>
<dbReference type="RefSeq" id="WP_011066031.1">
    <property type="nucleotide sequence ID" value="NC_004193.1"/>
</dbReference>
<dbReference type="SMR" id="Q8CXG6"/>
<dbReference type="STRING" id="221109.gene:10733871"/>
<dbReference type="KEGG" id="oih:OB1631"/>
<dbReference type="eggNOG" id="COG0249">
    <property type="taxonomic scope" value="Bacteria"/>
</dbReference>
<dbReference type="HOGENOM" id="CLU_002472_4_0_9"/>
<dbReference type="OrthoDB" id="9802448at2"/>
<dbReference type="PhylomeDB" id="Q8CXG6"/>
<dbReference type="Proteomes" id="UP000000822">
    <property type="component" value="Chromosome"/>
</dbReference>
<dbReference type="GO" id="GO:0005829">
    <property type="term" value="C:cytosol"/>
    <property type="evidence" value="ECO:0007669"/>
    <property type="project" value="TreeGrafter"/>
</dbReference>
<dbReference type="GO" id="GO:0005524">
    <property type="term" value="F:ATP binding"/>
    <property type="evidence" value="ECO:0007669"/>
    <property type="project" value="UniProtKB-UniRule"/>
</dbReference>
<dbReference type="GO" id="GO:0140664">
    <property type="term" value="F:ATP-dependent DNA damage sensor activity"/>
    <property type="evidence" value="ECO:0007669"/>
    <property type="project" value="InterPro"/>
</dbReference>
<dbReference type="GO" id="GO:0003684">
    <property type="term" value="F:damaged DNA binding"/>
    <property type="evidence" value="ECO:0007669"/>
    <property type="project" value="UniProtKB-UniRule"/>
</dbReference>
<dbReference type="GO" id="GO:0030983">
    <property type="term" value="F:mismatched DNA binding"/>
    <property type="evidence" value="ECO:0007669"/>
    <property type="project" value="InterPro"/>
</dbReference>
<dbReference type="GO" id="GO:0006298">
    <property type="term" value="P:mismatch repair"/>
    <property type="evidence" value="ECO:0007669"/>
    <property type="project" value="UniProtKB-UniRule"/>
</dbReference>
<dbReference type="CDD" id="cd03284">
    <property type="entry name" value="ABC_MutS1"/>
    <property type="match status" value="1"/>
</dbReference>
<dbReference type="FunFam" id="1.10.1420.10:FF:000007">
    <property type="entry name" value="DNA mismatch repair protein MutS"/>
    <property type="match status" value="1"/>
</dbReference>
<dbReference type="FunFam" id="3.40.1170.10:FF:000001">
    <property type="entry name" value="DNA mismatch repair protein MutS"/>
    <property type="match status" value="1"/>
</dbReference>
<dbReference type="FunFam" id="3.40.50.300:FF:000896">
    <property type="entry name" value="DNA mismatch repair protein MutS"/>
    <property type="match status" value="1"/>
</dbReference>
<dbReference type="Gene3D" id="1.10.1420.10">
    <property type="match status" value="2"/>
</dbReference>
<dbReference type="Gene3D" id="3.40.1170.10">
    <property type="entry name" value="DNA repair protein MutS, domain I"/>
    <property type="match status" value="1"/>
</dbReference>
<dbReference type="Gene3D" id="3.30.420.110">
    <property type="entry name" value="MutS, connector domain"/>
    <property type="match status" value="1"/>
</dbReference>
<dbReference type="Gene3D" id="3.40.50.300">
    <property type="entry name" value="P-loop containing nucleotide triphosphate hydrolases"/>
    <property type="match status" value="1"/>
</dbReference>
<dbReference type="HAMAP" id="MF_00096">
    <property type="entry name" value="MutS"/>
    <property type="match status" value="1"/>
</dbReference>
<dbReference type="InterPro" id="IPR005748">
    <property type="entry name" value="DNA_mismatch_repair_MutS"/>
</dbReference>
<dbReference type="InterPro" id="IPR007695">
    <property type="entry name" value="DNA_mismatch_repair_MutS-lik_N"/>
</dbReference>
<dbReference type="InterPro" id="IPR017261">
    <property type="entry name" value="DNA_mismatch_repair_MutS/MSH"/>
</dbReference>
<dbReference type="InterPro" id="IPR000432">
    <property type="entry name" value="DNA_mismatch_repair_MutS_C"/>
</dbReference>
<dbReference type="InterPro" id="IPR007861">
    <property type="entry name" value="DNA_mismatch_repair_MutS_clamp"/>
</dbReference>
<dbReference type="InterPro" id="IPR007696">
    <property type="entry name" value="DNA_mismatch_repair_MutS_core"/>
</dbReference>
<dbReference type="InterPro" id="IPR016151">
    <property type="entry name" value="DNA_mismatch_repair_MutS_N"/>
</dbReference>
<dbReference type="InterPro" id="IPR036187">
    <property type="entry name" value="DNA_mismatch_repair_MutS_sf"/>
</dbReference>
<dbReference type="InterPro" id="IPR007860">
    <property type="entry name" value="DNA_mmatch_repair_MutS_con_dom"/>
</dbReference>
<dbReference type="InterPro" id="IPR045076">
    <property type="entry name" value="MutS"/>
</dbReference>
<dbReference type="InterPro" id="IPR036678">
    <property type="entry name" value="MutS_con_dom_sf"/>
</dbReference>
<dbReference type="InterPro" id="IPR027417">
    <property type="entry name" value="P-loop_NTPase"/>
</dbReference>
<dbReference type="NCBIfam" id="TIGR01070">
    <property type="entry name" value="mutS1"/>
    <property type="match status" value="1"/>
</dbReference>
<dbReference type="NCBIfam" id="NF003810">
    <property type="entry name" value="PRK05399.1"/>
    <property type="match status" value="1"/>
</dbReference>
<dbReference type="PANTHER" id="PTHR11361:SF34">
    <property type="entry name" value="DNA MISMATCH REPAIR PROTEIN MSH1, MITOCHONDRIAL"/>
    <property type="match status" value="1"/>
</dbReference>
<dbReference type="PANTHER" id="PTHR11361">
    <property type="entry name" value="DNA MISMATCH REPAIR PROTEIN MUTS FAMILY MEMBER"/>
    <property type="match status" value="1"/>
</dbReference>
<dbReference type="Pfam" id="PF01624">
    <property type="entry name" value="MutS_I"/>
    <property type="match status" value="1"/>
</dbReference>
<dbReference type="Pfam" id="PF05188">
    <property type="entry name" value="MutS_II"/>
    <property type="match status" value="1"/>
</dbReference>
<dbReference type="Pfam" id="PF05192">
    <property type="entry name" value="MutS_III"/>
    <property type="match status" value="1"/>
</dbReference>
<dbReference type="Pfam" id="PF05190">
    <property type="entry name" value="MutS_IV"/>
    <property type="match status" value="1"/>
</dbReference>
<dbReference type="Pfam" id="PF00488">
    <property type="entry name" value="MutS_V"/>
    <property type="match status" value="1"/>
</dbReference>
<dbReference type="PIRSF" id="PIRSF037677">
    <property type="entry name" value="DNA_mis_repair_Msh6"/>
    <property type="match status" value="1"/>
</dbReference>
<dbReference type="SMART" id="SM00534">
    <property type="entry name" value="MUTSac"/>
    <property type="match status" value="1"/>
</dbReference>
<dbReference type="SMART" id="SM00533">
    <property type="entry name" value="MUTSd"/>
    <property type="match status" value="1"/>
</dbReference>
<dbReference type="SUPFAM" id="SSF55271">
    <property type="entry name" value="DNA repair protein MutS, domain I"/>
    <property type="match status" value="1"/>
</dbReference>
<dbReference type="SUPFAM" id="SSF53150">
    <property type="entry name" value="DNA repair protein MutS, domain II"/>
    <property type="match status" value="1"/>
</dbReference>
<dbReference type="SUPFAM" id="SSF48334">
    <property type="entry name" value="DNA repair protein MutS, domain III"/>
    <property type="match status" value="1"/>
</dbReference>
<dbReference type="SUPFAM" id="SSF52540">
    <property type="entry name" value="P-loop containing nucleoside triphosphate hydrolases"/>
    <property type="match status" value="1"/>
</dbReference>
<dbReference type="PROSITE" id="PS00486">
    <property type="entry name" value="DNA_MISMATCH_REPAIR_2"/>
    <property type="match status" value="1"/>
</dbReference>
<gene>
    <name evidence="1" type="primary">mutS</name>
    <name type="ordered locus">OB1631</name>
</gene>
<keyword id="KW-0067">ATP-binding</keyword>
<keyword id="KW-0227">DNA damage</keyword>
<keyword id="KW-0234">DNA repair</keyword>
<keyword id="KW-0238">DNA-binding</keyword>
<keyword id="KW-0547">Nucleotide-binding</keyword>
<keyword id="KW-1185">Reference proteome</keyword>
<proteinExistence type="inferred from homology"/>
<comment type="function">
    <text evidence="1">This protein is involved in the repair of mismatches in DNA. It is possible that it carries out the mismatch recognition step. This protein has a weak ATPase activity.</text>
</comment>
<comment type="similarity">
    <text evidence="1">Belongs to the DNA mismatch repair MutS family.</text>
</comment>
<name>MUTS_OCEIH</name>
<sequence length="867" mass="99724">MAKLTPMMEQYIQIKNEYKDAFLFYRLGDFYELFYEDATRAAQELEITLTKRAGGKGDPIPMCGVPYHSAENYIKTLIDRGYKVAICEQVEDPKTAKGVVKREVVQMITPGTVMESTMLTDGENNYIGSLSHFQDGSYVIVYNDLSTGENRLAFINDGWDAVIHEFYNQPIKEIVISSNLPEELQIQLKERLNVTLSYQDEVTFNAEFRELSENLNDERLMKAFSRLLNYIQTTQKRSLHHLQKAEVIELKKYMSLDMYSKRNLELTETIMKKSKHGSLLWVLDKTVTAMGARTLKKWLERPLLSKQKINERLEVVQGFYDGFMERESLRDLLKSVYDLERLSGRIAFGNVNARDLIQLKQSLSRIPAIQETLRQFDQPEITRLAEMLIYPEQMVESLEKSIVDEPPISIKEGSLIKEGYHDQLDTYRDASRNGKKWIAQLEHQEREETGIRSLKVGYNRVFGYYIEITKPNLHLLPEGRYERRQTLTNAERFVNEELKEKEKLILEAEEKSVELEYDLFIQIRDQIKEEIPLIQQLAHIISQMDVLQSFATVSESNNYVRPDFNDEQLQVTKGRHPVVEQVMKDGTFVPNDVVFDKSQNMLLITGPNMSGKSTYMRQVALTSIMGQIGCFIPAEQATLCVFDQIFTRIGAADDLVSGQSTFMVEMLEARHAISNATDRSLILLDEIGRGTSTYDGMALAQAIVEYIHHNIAAKTLFSTHYHELTALEDSLHHLKNIHVRAEEHEGNVVFLHQIKEGAADQSYGIHVAKLADLPNELIERASVILEELEDDSNKKPTPTKDKLESGQLSFFIEESNKKKAEMPKQEKTHNNQEQSVIEDLKNVNVLDLTPLEAMNELYRLQKGLKQY</sequence>
<accession>Q8CXG6</accession>